<name>BOL2_BOMPE</name>
<reference key="1">
    <citation type="journal article" date="1985" name="J. Biol. Chem.">
        <title>Bombolitins, a new class of mast cell degranulating peptides from the venom of the bumblebee Megabombus pennsylvanicus.</title>
        <authorList>
            <person name="Argiolas A."/>
            <person name="Pisano J.J."/>
        </authorList>
    </citation>
    <scope>PROTEIN SEQUENCE</scope>
    <scope>AMIDATION AT VAL-17</scope>
    <scope>SUBCELLULAR LOCATION</scope>
    <source>
        <tissue>Venom</tissue>
    </source>
</reference>
<proteinExistence type="evidence at protein level"/>
<sequence length="17" mass="1806">SKITDILAKLGKVLAHV</sequence>
<dbReference type="PIR" id="B22595">
    <property type="entry name" value="B22595"/>
</dbReference>
<dbReference type="GO" id="GO:0005576">
    <property type="term" value="C:extracellular region"/>
    <property type="evidence" value="ECO:0007669"/>
    <property type="project" value="UniProtKB-SubCell"/>
</dbReference>
<dbReference type="GO" id="GO:0090729">
    <property type="term" value="F:toxin activity"/>
    <property type="evidence" value="ECO:0007669"/>
    <property type="project" value="UniProtKB-KW"/>
</dbReference>
<dbReference type="InterPro" id="IPR012534">
    <property type="entry name" value="Bombolitin"/>
</dbReference>
<dbReference type="Pfam" id="PF08096">
    <property type="entry name" value="Bombolitin"/>
    <property type="match status" value="1"/>
</dbReference>
<organism>
    <name type="scientific">Bombus pensylvanicus</name>
    <name type="common">American bumblebee</name>
    <name type="synonym">Apis pensylvanica</name>
    <dbReference type="NCBI Taxonomy" id="28643"/>
    <lineage>
        <taxon>Eukaryota</taxon>
        <taxon>Metazoa</taxon>
        <taxon>Ecdysozoa</taxon>
        <taxon>Arthropoda</taxon>
        <taxon>Hexapoda</taxon>
        <taxon>Insecta</taxon>
        <taxon>Pterygota</taxon>
        <taxon>Neoptera</taxon>
        <taxon>Endopterygota</taxon>
        <taxon>Hymenoptera</taxon>
        <taxon>Apocrita</taxon>
        <taxon>Aculeata</taxon>
        <taxon>Apoidea</taxon>
        <taxon>Anthophila</taxon>
        <taxon>Apidae</taxon>
        <taxon>Bombus</taxon>
        <taxon>Fervidobombus</taxon>
    </lineage>
</organism>
<accession>P07493</accession>
<evidence type="ECO:0000250" key="1">
    <source>
        <dbReference type="UniProtKB" id="P01514"/>
    </source>
</evidence>
<evidence type="ECO:0000250" key="2">
    <source>
        <dbReference type="UniProtKB" id="P84914"/>
    </source>
</evidence>
<evidence type="ECO:0000269" key="3">
    <source>
    </source>
</evidence>
<evidence type="ECO:0000303" key="4">
    <source>
    </source>
</evidence>
<evidence type="ECO:0000305" key="5"/>
<evidence type="ECO:0000305" key="6">
    <source>
    </source>
</evidence>
<feature type="peptide" id="PRO_0000044039" description="Bombolitin-2" evidence="3">
    <location>
        <begin position="1"/>
        <end position="17"/>
    </location>
</feature>
<feature type="modified residue" description="Valine amide" evidence="3">
    <location>
        <position position="17"/>
    </location>
</feature>
<comment type="function">
    <text evidence="1 2 3">Mast cell degranulating peptide (PubMed:2578459). Its mast cell degranulation activity may be related to the activation of G-protein coupled receptors in mast cells as well as interaction with other proteins located in cell endosomal membranes in the mast cells (By similarity).</text>
</comment>
<comment type="subcellular location">
    <subcellularLocation>
        <location evidence="3">Secreted</location>
    </subcellularLocation>
</comment>
<comment type="tissue specificity">
    <text evidence="6">Expressed by the venom gland.</text>
</comment>
<comment type="similarity">
    <text evidence="5">Belongs to the MCD family. Bombolitin subfamily.</text>
</comment>
<protein>
    <recommendedName>
        <fullName evidence="5">Bombolitin-2</fullName>
    </recommendedName>
    <alternativeName>
        <fullName evidence="4">Bombolitin II</fullName>
    </alternativeName>
</protein>
<keyword id="KW-0027">Amidation</keyword>
<keyword id="KW-0903">Direct protein sequencing</keyword>
<keyword id="KW-1213">G-protein coupled receptor impairing toxin</keyword>
<keyword id="KW-0467">Mast cell degranulation</keyword>
<keyword id="KW-0964">Secreted</keyword>
<keyword id="KW-0800">Toxin</keyword>